<geneLocation type="mitochondrion"/>
<protein>
    <recommendedName>
        <fullName>Cytochrome c oxidase subunit 1</fullName>
        <ecNumber>7.1.1.9</ecNumber>
    </recommendedName>
    <alternativeName>
        <fullName>Cytochrome c oxidase polypeptide I</fullName>
    </alternativeName>
</protein>
<feature type="chain" id="PRO_0000183361" description="Cytochrome c oxidase subunit 1">
    <location>
        <begin position="1" status="less than"/>
        <end position="160" status="greater than"/>
    </location>
</feature>
<feature type="transmembrane region" description="Helical; Name=VI" evidence="2">
    <location>
        <begin position="1" status="less than"/>
        <end position="31"/>
    </location>
</feature>
<feature type="topological domain" description="Mitochondrial matrix" evidence="2">
    <location>
        <begin position="32"/>
        <end position="39"/>
    </location>
</feature>
<feature type="transmembrane region" description="Helical; Name=VII" evidence="2">
    <location>
        <begin position="40"/>
        <end position="56"/>
    </location>
</feature>
<feature type="topological domain" description="Mitochondrial intermembrane" evidence="2">
    <location>
        <begin position="57"/>
        <end position="68"/>
    </location>
</feature>
<feature type="transmembrane region" description="Helical; Name=VIII" evidence="2">
    <location>
        <begin position="69"/>
        <end position="97"/>
    </location>
</feature>
<feature type="topological domain" description="Mitochondrial matrix" evidence="2">
    <location>
        <begin position="98"/>
        <end position="105"/>
    </location>
</feature>
<feature type="transmembrane region" description="Helical; Name=IX" evidence="2">
    <location>
        <begin position="106"/>
        <end position="127"/>
    </location>
</feature>
<feature type="topological domain" description="Mitochondrial intermembrane" evidence="2">
    <location>
        <begin position="128"/>
        <end position="140"/>
    </location>
</feature>
<feature type="transmembrane region" description="Helical; Name=X" evidence="2">
    <location>
        <begin position="141"/>
        <end position="160" status="greater than"/>
    </location>
</feature>
<feature type="binding site" evidence="2">
    <location>
        <position position="10"/>
    </location>
    <ligand>
        <name>Cu cation</name>
        <dbReference type="ChEBI" id="CHEBI:23378"/>
        <label>B</label>
    </ligand>
</feature>
<feature type="binding site" evidence="2">
    <location>
        <position position="14"/>
    </location>
    <ligand>
        <name>O2</name>
        <dbReference type="ChEBI" id="CHEBI:15379"/>
    </ligand>
</feature>
<feature type="binding site" evidence="2">
    <location>
        <position position="60"/>
    </location>
    <ligand>
        <name>Cu cation</name>
        <dbReference type="ChEBI" id="CHEBI:23378"/>
        <label>B</label>
    </ligand>
</feature>
<feature type="binding site" evidence="2">
    <location>
        <position position="61"/>
    </location>
    <ligand>
        <name>Cu cation</name>
        <dbReference type="ChEBI" id="CHEBI:23378"/>
        <label>B</label>
    </ligand>
</feature>
<feature type="binding site" evidence="2">
    <location>
        <position position="138"/>
    </location>
    <ligand>
        <name>Mg(2+)</name>
        <dbReference type="ChEBI" id="CHEBI:18420"/>
        <note>ligand shared with MT-CO2</note>
    </ligand>
</feature>
<feature type="binding site" evidence="2">
    <location>
        <position position="139"/>
    </location>
    <ligand>
        <name>Mg(2+)</name>
        <dbReference type="ChEBI" id="CHEBI:18420"/>
        <note>ligand shared with MT-CO2</note>
    </ligand>
</feature>
<feature type="binding site" description="axial binding residue" evidence="2">
    <location>
        <position position="146"/>
    </location>
    <ligand>
        <name>heme a3</name>
        <dbReference type="ChEBI" id="CHEBI:83282"/>
        <note>high-spin</note>
    </ligand>
    <ligandPart>
        <name>Fe</name>
        <dbReference type="ChEBI" id="CHEBI:18248"/>
    </ligandPart>
</feature>
<feature type="binding site" description="axial binding residue" evidence="2">
    <location>
        <position position="148"/>
    </location>
    <ligand>
        <name>Fe(II)-heme a</name>
        <dbReference type="ChEBI" id="CHEBI:61715"/>
        <note>low-spin</note>
    </ligand>
    <ligandPart>
        <name>Fe</name>
        <dbReference type="ChEBI" id="CHEBI:18248"/>
    </ligandPart>
</feature>
<feature type="cross-link" description="1'-histidyl-3'-tyrosine (His-Tyr)" evidence="2">
    <location>
        <begin position="10"/>
        <end position="14"/>
    </location>
</feature>
<feature type="non-terminal residue">
    <location>
        <position position="1"/>
    </location>
</feature>
<feature type="non-terminal residue">
    <location>
        <position position="160"/>
    </location>
</feature>
<reference key="1">
    <citation type="journal article" date="1991" name="Mol. Biol. Evol.">
        <title>Phylogenetic relationships of neopterygian fishes, inferred from mitochondrial DNA sequences.</title>
        <authorList>
            <person name="Normark B.B."/>
            <person name="McCune A.R."/>
            <person name="Harrison R.G."/>
        </authorList>
    </citation>
    <scope>NUCLEOTIDE SEQUENCE [GENOMIC DNA]</scope>
</reference>
<dbReference type="EC" id="7.1.1.9"/>
<dbReference type="EMBL" id="M64903">
    <property type="protein sequence ID" value="AAB01469.1"/>
    <property type="molecule type" value="Genomic_DNA"/>
</dbReference>
<dbReference type="SMR" id="P29648"/>
<dbReference type="UniPathway" id="UPA00705"/>
<dbReference type="GO" id="GO:0005743">
    <property type="term" value="C:mitochondrial inner membrane"/>
    <property type="evidence" value="ECO:0007669"/>
    <property type="project" value="UniProtKB-SubCell"/>
</dbReference>
<dbReference type="GO" id="GO:0045277">
    <property type="term" value="C:respiratory chain complex IV"/>
    <property type="evidence" value="ECO:0000250"/>
    <property type="project" value="UniProtKB"/>
</dbReference>
<dbReference type="GO" id="GO:0004129">
    <property type="term" value="F:cytochrome-c oxidase activity"/>
    <property type="evidence" value="ECO:0007669"/>
    <property type="project" value="UniProtKB-EC"/>
</dbReference>
<dbReference type="GO" id="GO:0020037">
    <property type="term" value="F:heme binding"/>
    <property type="evidence" value="ECO:0007669"/>
    <property type="project" value="InterPro"/>
</dbReference>
<dbReference type="GO" id="GO:0046872">
    <property type="term" value="F:metal ion binding"/>
    <property type="evidence" value="ECO:0007669"/>
    <property type="project" value="UniProtKB-KW"/>
</dbReference>
<dbReference type="GO" id="GO:0015990">
    <property type="term" value="P:electron transport coupled proton transport"/>
    <property type="evidence" value="ECO:0007669"/>
    <property type="project" value="TreeGrafter"/>
</dbReference>
<dbReference type="GO" id="GO:0006123">
    <property type="term" value="P:mitochondrial electron transport, cytochrome c to oxygen"/>
    <property type="evidence" value="ECO:0007669"/>
    <property type="project" value="TreeGrafter"/>
</dbReference>
<dbReference type="FunFam" id="1.20.210.10:FF:000009">
    <property type="entry name" value="Cytochrome c oxidase subunit 1"/>
    <property type="match status" value="1"/>
</dbReference>
<dbReference type="Gene3D" id="1.20.210.10">
    <property type="entry name" value="Cytochrome c oxidase-like, subunit I domain"/>
    <property type="match status" value="1"/>
</dbReference>
<dbReference type="InterPro" id="IPR023616">
    <property type="entry name" value="Cyt_c_oxase-like_su1_dom"/>
</dbReference>
<dbReference type="InterPro" id="IPR036927">
    <property type="entry name" value="Cyt_c_oxase-like_su1_sf"/>
</dbReference>
<dbReference type="InterPro" id="IPR000883">
    <property type="entry name" value="Cyt_C_Oxase_1"/>
</dbReference>
<dbReference type="InterPro" id="IPR023615">
    <property type="entry name" value="Cyt_c_Oxase_su1_BS"/>
</dbReference>
<dbReference type="PANTHER" id="PTHR10422">
    <property type="entry name" value="CYTOCHROME C OXIDASE SUBUNIT 1"/>
    <property type="match status" value="1"/>
</dbReference>
<dbReference type="PANTHER" id="PTHR10422:SF18">
    <property type="entry name" value="CYTOCHROME C OXIDASE SUBUNIT 1"/>
    <property type="match status" value="1"/>
</dbReference>
<dbReference type="Pfam" id="PF00115">
    <property type="entry name" value="COX1"/>
    <property type="match status" value="1"/>
</dbReference>
<dbReference type="PRINTS" id="PR01165">
    <property type="entry name" value="CYCOXIDASEI"/>
</dbReference>
<dbReference type="SUPFAM" id="SSF81442">
    <property type="entry name" value="Cytochrome c oxidase subunit I-like"/>
    <property type="match status" value="1"/>
</dbReference>
<dbReference type="PROSITE" id="PS50855">
    <property type="entry name" value="COX1"/>
    <property type="match status" value="1"/>
</dbReference>
<dbReference type="PROSITE" id="PS00077">
    <property type="entry name" value="COX1_CUB"/>
    <property type="match status" value="1"/>
</dbReference>
<evidence type="ECO:0000250" key="1">
    <source>
        <dbReference type="UniProtKB" id="P00395"/>
    </source>
</evidence>
<evidence type="ECO:0000250" key="2">
    <source>
        <dbReference type="UniProtKB" id="P00396"/>
    </source>
</evidence>
<evidence type="ECO:0000250" key="3">
    <source>
        <dbReference type="UniProtKB" id="P00401"/>
    </source>
</evidence>
<evidence type="ECO:0000305" key="4"/>
<sequence>YQHLFWFFGHPEVYILILPGFGMISHIVAYYAGKKEPFGYMGMVWAMMAIGLLGFIVWAHHMFTVGMDVDTRAYFTSATMIIAIPTGVKVFSWLATLHGGSIKWDTPLLWALGFIFLFTVGGLTGIVLANSSIDIVLHDTYYVVAHFHYVLSMGAVFAIM</sequence>
<accession>P29648</accession>
<keyword id="KW-0186">Copper</keyword>
<keyword id="KW-0249">Electron transport</keyword>
<keyword id="KW-0349">Heme</keyword>
<keyword id="KW-0408">Iron</keyword>
<keyword id="KW-0460">Magnesium</keyword>
<keyword id="KW-0472">Membrane</keyword>
<keyword id="KW-0479">Metal-binding</keyword>
<keyword id="KW-0496">Mitochondrion</keyword>
<keyword id="KW-0999">Mitochondrion inner membrane</keyword>
<keyword id="KW-0679">Respiratory chain</keyword>
<keyword id="KW-0915">Sodium</keyword>
<keyword id="KW-1278">Translocase</keyword>
<keyword id="KW-0812">Transmembrane</keyword>
<keyword id="KW-1133">Transmembrane helix</keyword>
<keyword id="KW-0813">Transport</keyword>
<proteinExistence type="inferred from homology"/>
<name>COX1_MEGAT</name>
<organism>
    <name type="scientific">Megalops atlanticus</name>
    <name type="common">Tarpon</name>
    <name type="synonym">Clupea gigantea</name>
    <dbReference type="NCBI Taxonomy" id="7932"/>
    <lineage>
        <taxon>Eukaryota</taxon>
        <taxon>Metazoa</taxon>
        <taxon>Chordata</taxon>
        <taxon>Craniata</taxon>
        <taxon>Vertebrata</taxon>
        <taxon>Euteleostomi</taxon>
        <taxon>Actinopterygii</taxon>
        <taxon>Neopterygii</taxon>
        <taxon>Teleostei</taxon>
        <taxon>Elopiformes</taxon>
        <taxon>Megalopidae</taxon>
        <taxon>Megalops</taxon>
    </lineage>
</organism>
<comment type="function">
    <text evidence="3">Component of the cytochrome c oxidase, the last enzyme in the mitochondrial electron transport chain which drives oxidative phosphorylation. The respiratory chain contains 3 multisubunit complexes succinate dehydrogenase (complex II, CII), ubiquinol-cytochrome c oxidoreductase (cytochrome b-c1 complex, complex III, CIII) and cytochrome c oxidase (complex IV, CIV), that cooperate to transfer electrons derived from NADH and succinate to molecular oxygen, creating an electrochemical gradient over the inner membrane that drives transmembrane transport and the ATP synthase. Cytochrome c oxidase is the component of the respiratory chain that catalyzes the reduction of oxygen to water. Electrons originating from reduced cytochrome c in the intermembrane space (IMS) are transferred via the dinuclear copper A center (CU(A)) of subunit 2 and heme A of subunit 1 to the active site in subunit 1, a binuclear center (BNC) formed by heme A3 and copper B (CU(B)). The BNC reduces molecular oxygen to 2 water molecules using 4 electrons from cytochrome c in the IMS and 4 protons from the mitochondrial matrix.</text>
</comment>
<comment type="catalytic activity">
    <reaction evidence="3">
        <text>4 Fe(II)-[cytochrome c] + O2 + 8 H(+)(in) = 4 Fe(III)-[cytochrome c] + 2 H2O + 4 H(+)(out)</text>
        <dbReference type="Rhea" id="RHEA:11436"/>
        <dbReference type="Rhea" id="RHEA-COMP:10350"/>
        <dbReference type="Rhea" id="RHEA-COMP:14399"/>
        <dbReference type="ChEBI" id="CHEBI:15377"/>
        <dbReference type="ChEBI" id="CHEBI:15378"/>
        <dbReference type="ChEBI" id="CHEBI:15379"/>
        <dbReference type="ChEBI" id="CHEBI:29033"/>
        <dbReference type="ChEBI" id="CHEBI:29034"/>
        <dbReference type="EC" id="7.1.1.9"/>
    </reaction>
    <physiologicalReaction direction="left-to-right" evidence="3">
        <dbReference type="Rhea" id="RHEA:11437"/>
    </physiologicalReaction>
</comment>
<comment type="cofactor">
    <cofactor evidence="2">
        <name>heme</name>
        <dbReference type="ChEBI" id="CHEBI:30413"/>
    </cofactor>
    <text evidence="2">Binds 2 heme A groups non-covalently per subunit.</text>
</comment>
<comment type="cofactor">
    <cofactor evidence="2">
        <name>Cu cation</name>
        <dbReference type="ChEBI" id="CHEBI:23378"/>
    </cofactor>
    <text evidence="2">Binds a copper B center.</text>
</comment>
<comment type="pathway">
    <text evidence="3">Energy metabolism; oxidative phosphorylation.</text>
</comment>
<comment type="subunit">
    <text evidence="1 2">Component of the cytochrome c oxidase (complex IV, CIV), a multisubunit enzyme composed of 14 subunits. The complex is composed of a catalytic core of 3 subunits MT-CO1, MT-CO2 and MT-CO3, encoded in the mitochondrial DNA, and 11 supernumerary subunits COX4I, COX5A, COX5B, COX6A, COX6B, COX6C, COX7A, COX7B, COX7C, COX8 and NDUFA4, which are encoded in the nuclear genome. The complex exists as a monomer or a dimer and forms supercomplexes (SCs) in the inner mitochondrial membrane with NADH-ubiquinone oxidoreductase (complex I, CI) and ubiquinol-cytochrome c oxidoreductase (cytochrome b-c1 complex, complex III, CIII), resulting in different assemblies (supercomplex SCI(1)III(2)IV(1) and megacomplex MCI(2)III(2)IV(2)) (By similarity). As a newly synthesized protein, rapidly incorporates into a multi-subunit assembly intermediate in the inner membrane, called MITRAC (mitochondrial translation regulation assembly intermediate of cytochrome c oxidase) complex, whose core components are COA3/MITRAC12 and COX14. Within the MITRAC complex, interacts with COA3 and with SMIM20/MITRAC7; the interaction with SMIM20 stabilizes the newly synthesized MT-CO1 and prevents its premature turnover. Interacts with TMEM177 in a COX20-dependent manner (By similarity).</text>
</comment>
<comment type="subcellular location">
    <subcellularLocation>
        <location evidence="2">Mitochondrion inner membrane</location>
        <topology evidence="2">Multi-pass membrane protein</topology>
    </subcellularLocation>
</comment>
<comment type="similarity">
    <text evidence="4">Belongs to the heme-copper respiratory oxidase family.</text>
</comment>
<gene>
    <name type="primary">mt-co1</name>
    <name type="synonym">coi</name>
    <name type="synonym">coxi</name>
    <name type="synonym">mtco1</name>
</gene>